<proteinExistence type="evidence at protein level"/>
<sequence>MRTLALLAAILLVALQAQAEHISVSIDEVVDQQPPQAEDQDVAIYVKEHESSALEALGVKAGVVCACRRALCLPLERRAGFCRIRGRIHPLCCRR</sequence>
<reference key="1">
    <citation type="journal article" date="1989" name="J. Immunol.">
        <title>The structure of the rabbit macrophage defensin genes and their organ-specific expression.</title>
        <authorList>
            <person name="Ganz T."/>
            <person name="Rayner J.R."/>
            <person name="Valore E.V."/>
            <person name="Tumolo A."/>
            <person name="Talmadge K."/>
            <person name="Fuller F."/>
        </authorList>
    </citation>
    <scope>NUCLEOTIDE SEQUENCE</scope>
</reference>
<reference key="2">
    <citation type="journal article" date="1993" name="Biochem. Biophys. Res. Commun.">
        <title>Differential expression of corticostatins/defensins: higher levels of CS-4 (NP-2) transcripts compared with CS-6 (NP-5) in rabbit lung.</title>
        <authorList>
            <person name="Sadro L.C."/>
            <person name="Tremblay A."/>
            <person name="Solomon S."/>
            <person name="Palfree R.G.E."/>
        </authorList>
    </citation>
    <scope>NUCLEOTIDE SEQUENCE [MRNA]</scope>
</reference>
<reference key="3">
    <citation type="journal article" date="1983" name="J. Biol. Chem.">
        <title>Primary structures of MCP-1 and MCP-2, natural peptide antibiotics of rabbit lung macrophages.</title>
        <authorList>
            <person name="Selsted M.E."/>
            <person name="Brown D.M."/>
            <person name="Delange R.J."/>
            <person name="Lehrer R.I."/>
        </authorList>
    </citation>
    <scope>PROTEIN SEQUENCE OF 63-95</scope>
    <source>
        <tissue>Lung macrophage</tissue>
    </source>
</reference>
<reference key="4">
    <citation type="journal article" date="1985" name="J. Biol. Chem.">
        <title>Primary structures of six antimicrobial peptides of rabbit peritoneal neutrophils.</title>
        <authorList>
            <person name="Selsted M.E."/>
            <person name="Brown D.M."/>
            <person name="Delange R.J."/>
            <person name="Harwig S.S.L."/>
            <person name="Lehrer R.I."/>
        </authorList>
    </citation>
    <scope>PROTEIN SEQUENCE OF 63-95</scope>
    <source>
        <tissue>Peritoneal neutrophil</tissue>
    </source>
</reference>
<reference key="5">
    <citation type="journal article" date="1992" name="Endocrinology">
        <title>Isolation and mode of action of rabbit corticostatic (antiadrenocorticotropin) peptides.</title>
        <authorList>
            <person name="Zhu Q."/>
            <person name="Solomon S."/>
        </authorList>
    </citation>
    <scope>PROTEIN SEQUENCE OF 63-95</scope>
    <scope>FUNCTION</scope>
    <source>
        <tissue>Lung</tissue>
    </source>
</reference>
<reference key="6">
    <citation type="journal article" date="1992" name="Biochemistry">
        <title>NMR studies of defensin antimicrobial peptides. 1. Resonance assignment and secondary structure determination of rabbit NP-2 and human HNP-1.</title>
        <authorList>
            <person name="Zhang X.-L."/>
            <person name="Selsted M.E."/>
            <person name="Pardi A."/>
        </authorList>
    </citation>
    <scope>STRUCTURE BY NMR OF 63-95</scope>
</reference>
<reference key="7">
    <citation type="journal article" date="1992" name="Biochemistry">
        <title>NMR studies of defensin antimicrobial peptides. 2. Three-dimensional structures of rabbit NP-2 and human HNP-1.</title>
        <authorList>
            <person name="Pardi A."/>
            <person name="Zhang X.-L."/>
            <person name="Selsted M.E."/>
            <person name="Skalicky J.J."/>
            <person name="Yip P.F."/>
        </authorList>
    </citation>
    <scope>STRUCTURE BY NMR OF 63-95</scope>
</reference>
<keyword id="KW-0044">Antibiotic</keyword>
<keyword id="KW-0929">Antimicrobial</keyword>
<keyword id="KW-0051">Antiviral defense</keyword>
<keyword id="KW-0211">Defensin</keyword>
<keyword id="KW-0903">Direct protein sequencing</keyword>
<keyword id="KW-1015">Disulfide bond</keyword>
<keyword id="KW-0295">Fungicide</keyword>
<keyword id="KW-1185">Reference proteome</keyword>
<keyword id="KW-0964">Secreted</keyword>
<keyword id="KW-0732">Signal</keyword>
<evidence type="ECO:0000250" key="1">
    <source>
        <dbReference type="UniProtKB" id="P12838"/>
    </source>
</evidence>
<evidence type="ECO:0000250" key="2">
    <source>
        <dbReference type="UniProtKB" id="P28311"/>
    </source>
</evidence>
<evidence type="ECO:0000250" key="3">
    <source>
        <dbReference type="UniProtKB" id="Q01523"/>
    </source>
</evidence>
<evidence type="ECO:0000255" key="4"/>
<evidence type="ECO:0000269" key="5">
    <source>
    </source>
</evidence>
<evidence type="ECO:0000269" key="6">
    <source>
    </source>
</evidence>
<evidence type="ECO:0000269" key="7">
    <source>
    </source>
</evidence>
<evidence type="ECO:0000305" key="8"/>
<name>DEF4_RABIT</name>
<feature type="signal peptide" evidence="4">
    <location>
        <begin position="1"/>
        <end position="19"/>
    </location>
</feature>
<feature type="propeptide" id="PRO_0000006811" evidence="5 6 7">
    <location>
        <begin position="20"/>
        <end position="62"/>
    </location>
</feature>
<feature type="peptide" id="PRO_0000006812" description="Defensin alpha 4">
    <location>
        <begin position="63"/>
        <end position="95"/>
    </location>
</feature>
<feature type="disulfide bond" evidence="2">
    <location>
        <begin position="65"/>
        <end position="93"/>
    </location>
</feature>
<feature type="disulfide bond" evidence="2">
    <location>
        <begin position="67"/>
        <end position="82"/>
    </location>
</feature>
<feature type="disulfide bond" evidence="2">
    <location>
        <begin position="72"/>
        <end position="92"/>
    </location>
</feature>
<protein>
    <recommendedName>
        <fullName evidence="1">Defensin alpha 4</fullName>
    </recommendedName>
    <alternativeName>
        <fullName>Antiadrenocorticotropin peptide IV</fullName>
    </alternativeName>
    <alternativeName>
        <fullName>Corticostatin IV</fullName>
        <shortName>CS-IV</shortName>
    </alternativeName>
    <alternativeName>
        <fullName>Corticostatin-4</fullName>
    </alternativeName>
    <alternativeName>
        <fullName>Macrophage antibiotic peptide MCP-2</fullName>
        <shortName>NP-2</shortName>
    </alternativeName>
</protein>
<dbReference type="EMBL" id="M28884">
    <property type="protein sequence ID" value="AAA31390.1"/>
    <property type="molecule type" value="mRNA"/>
</dbReference>
<dbReference type="EMBL" id="S55582">
    <property type="protein sequence ID" value="AAB25449.2"/>
    <property type="molecule type" value="mRNA"/>
</dbReference>
<dbReference type="EMBL" id="M28073">
    <property type="protein sequence ID" value="AAA31389.1"/>
    <property type="molecule type" value="Genomic_DNA"/>
</dbReference>
<dbReference type="EMBL" id="L10841">
    <property type="protein sequence ID" value="AAA31424.1"/>
    <property type="molecule type" value="mRNA"/>
</dbReference>
<dbReference type="PIR" id="B45811">
    <property type="entry name" value="WTRBM2"/>
</dbReference>
<dbReference type="RefSeq" id="NP_001164484.1">
    <property type="nucleotide sequence ID" value="NM_001171013.2"/>
</dbReference>
<dbReference type="RefSeq" id="XP_008272399.1">
    <property type="nucleotide sequence ID" value="XM_008274177.2"/>
</dbReference>
<dbReference type="SMR" id="P01377"/>
<dbReference type="STRING" id="9986.ENSOCUP00000027402"/>
<dbReference type="Ensembl" id="ENSOCUT00000023530.2">
    <property type="protein sequence ID" value="ENSOCUP00000023567.2"/>
    <property type="gene ID" value="ENSOCUG00000021307.2"/>
</dbReference>
<dbReference type="GeneID" id="100009116"/>
<dbReference type="CTD" id="100009116"/>
<dbReference type="GeneTree" id="ENSGT00940000153268"/>
<dbReference type="InParanoid" id="P01377"/>
<dbReference type="Proteomes" id="UP000001811">
    <property type="component" value="Unplaced"/>
</dbReference>
<dbReference type="Bgee" id="ENSOCUG00000021307">
    <property type="expression patterns" value="Expressed in lung and 18 other cell types or tissues"/>
</dbReference>
<dbReference type="GO" id="GO:0031012">
    <property type="term" value="C:extracellular matrix"/>
    <property type="evidence" value="ECO:0007669"/>
    <property type="project" value="TreeGrafter"/>
</dbReference>
<dbReference type="GO" id="GO:0005615">
    <property type="term" value="C:extracellular space"/>
    <property type="evidence" value="ECO:0007669"/>
    <property type="project" value="InterPro"/>
</dbReference>
<dbReference type="GO" id="GO:0019731">
    <property type="term" value="P:antibacterial humoral response"/>
    <property type="evidence" value="ECO:0007669"/>
    <property type="project" value="TreeGrafter"/>
</dbReference>
<dbReference type="GO" id="GO:0061844">
    <property type="term" value="P:antimicrobial humoral immune response mediated by antimicrobial peptide"/>
    <property type="evidence" value="ECO:0007669"/>
    <property type="project" value="TreeGrafter"/>
</dbReference>
<dbReference type="GO" id="GO:0071222">
    <property type="term" value="P:cellular response to lipopolysaccharide"/>
    <property type="evidence" value="ECO:0007669"/>
    <property type="project" value="TreeGrafter"/>
</dbReference>
<dbReference type="GO" id="GO:0050832">
    <property type="term" value="P:defense response to fungus"/>
    <property type="evidence" value="ECO:0007669"/>
    <property type="project" value="UniProtKB-KW"/>
</dbReference>
<dbReference type="GO" id="GO:0050829">
    <property type="term" value="P:defense response to Gram-negative bacterium"/>
    <property type="evidence" value="ECO:0007669"/>
    <property type="project" value="TreeGrafter"/>
</dbReference>
<dbReference type="GO" id="GO:0050830">
    <property type="term" value="P:defense response to Gram-positive bacterium"/>
    <property type="evidence" value="ECO:0007669"/>
    <property type="project" value="TreeGrafter"/>
</dbReference>
<dbReference type="GO" id="GO:0051607">
    <property type="term" value="P:defense response to virus"/>
    <property type="evidence" value="ECO:0007669"/>
    <property type="project" value="UniProtKB-KW"/>
</dbReference>
<dbReference type="GO" id="GO:0051673">
    <property type="term" value="P:disruption of plasma membrane integrity in another organism"/>
    <property type="evidence" value="ECO:0007669"/>
    <property type="project" value="TreeGrafter"/>
</dbReference>
<dbReference type="GO" id="GO:0002227">
    <property type="term" value="P:innate immune response in mucosa"/>
    <property type="evidence" value="ECO:0007669"/>
    <property type="project" value="TreeGrafter"/>
</dbReference>
<dbReference type="GO" id="GO:0031640">
    <property type="term" value="P:killing of cells of another organism"/>
    <property type="evidence" value="ECO:0007669"/>
    <property type="project" value="UniProtKB-KW"/>
</dbReference>
<dbReference type="InterPro" id="IPR016327">
    <property type="entry name" value="Alpha-defensin"/>
</dbReference>
<dbReference type="InterPro" id="IPR006081">
    <property type="entry name" value="Alpha-defensin_C"/>
</dbReference>
<dbReference type="InterPro" id="IPR002366">
    <property type="entry name" value="Alpha-defensin_N"/>
</dbReference>
<dbReference type="InterPro" id="IPR006080">
    <property type="entry name" value="Beta/alpha-defensin_C"/>
</dbReference>
<dbReference type="PANTHER" id="PTHR11876">
    <property type="entry name" value="ALPHA-DEFENSIN 1"/>
    <property type="match status" value="1"/>
</dbReference>
<dbReference type="PANTHER" id="PTHR11876:SF28">
    <property type="entry name" value="ALPHA-DEFENSIN 1"/>
    <property type="match status" value="1"/>
</dbReference>
<dbReference type="Pfam" id="PF00323">
    <property type="entry name" value="Defensin_1"/>
    <property type="match status" value="1"/>
</dbReference>
<dbReference type="Pfam" id="PF00879">
    <property type="entry name" value="Defensin_propep"/>
    <property type="match status" value="1"/>
</dbReference>
<dbReference type="PIRSF" id="PIRSF001875">
    <property type="entry name" value="Alpha-defensin"/>
    <property type="match status" value="1"/>
</dbReference>
<dbReference type="SMART" id="SM01418">
    <property type="entry name" value="Defensin_propep"/>
    <property type="match status" value="1"/>
</dbReference>
<dbReference type="SMART" id="SM00048">
    <property type="entry name" value="DEFSN"/>
    <property type="match status" value="1"/>
</dbReference>
<dbReference type="SUPFAM" id="SSF57392">
    <property type="entry name" value="Defensin-like"/>
    <property type="match status" value="1"/>
</dbReference>
<dbReference type="PROSITE" id="PS00269">
    <property type="entry name" value="DEFENSIN"/>
    <property type="match status" value="1"/>
</dbReference>
<organism>
    <name type="scientific">Oryctolagus cuniculus</name>
    <name type="common">Rabbit</name>
    <dbReference type="NCBI Taxonomy" id="9986"/>
    <lineage>
        <taxon>Eukaryota</taxon>
        <taxon>Metazoa</taxon>
        <taxon>Chordata</taxon>
        <taxon>Craniata</taxon>
        <taxon>Vertebrata</taxon>
        <taxon>Euteleostomi</taxon>
        <taxon>Mammalia</taxon>
        <taxon>Eutheria</taxon>
        <taxon>Euarchontoglires</taxon>
        <taxon>Glires</taxon>
        <taxon>Lagomorpha</taxon>
        <taxon>Leporidae</taxon>
        <taxon>Oryctolagus</taxon>
    </lineage>
</organism>
<accession>P01377</accession>
<comment type="function">
    <text evidence="2 5">Host-defense peptide that has antimicrobial activity (By similarity). Inhibits corticotropin (ACTH)-stimulated corticosterone production (in vitro) (PubMed:1311240).</text>
</comment>
<comment type="subcellular location">
    <subcellularLocation>
        <location evidence="3">Secreted</location>
    </subcellularLocation>
</comment>
<comment type="similarity">
    <text evidence="8">Belongs to the alpha-defensin family.</text>
</comment>